<protein>
    <recommendedName>
        <fullName evidence="1">tRNA pseudouridine synthase A</fullName>
        <ecNumber evidence="1">5.4.99.12</ecNumber>
    </recommendedName>
    <alternativeName>
        <fullName evidence="1">tRNA pseudouridine(38-40) synthase</fullName>
    </alternativeName>
    <alternativeName>
        <fullName evidence="1">tRNA pseudouridylate synthase I</fullName>
    </alternativeName>
    <alternativeName>
        <fullName evidence="1">tRNA-uridine isomerase I</fullName>
    </alternativeName>
</protein>
<gene>
    <name evidence="1" type="primary">truA</name>
    <name type="ordered locus">Acry_0411</name>
</gene>
<comment type="function">
    <text evidence="1">Formation of pseudouridine at positions 38, 39 and 40 in the anticodon stem and loop of transfer RNAs.</text>
</comment>
<comment type="catalytic activity">
    <reaction evidence="1">
        <text>uridine(38/39/40) in tRNA = pseudouridine(38/39/40) in tRNA</text>
        <dbReference type="Rhea" id="RHEA:22376"/>
        <dbReference type="Rhea" id="RHEA-COMP:10085"/>
        <dbReference type="Rhea" id="RHEA-COMP:10087"/>
        <dbReference type="ChEBI" id="CHEBI:65314"/>
        <dbReference type="ChEBI" id="CHEBI:65315"/>
        <dbReference type="EC" id="5.4.99.12"/>
    </reaction>
</comment>
<comment type="subunit">
    <text evidence="1">Homodimer.</text>
</comment>
<comment type="similarity">
    <text evidence="1">Belongs to the tRNA pseudouridine synthase TruA family.</text>
</comment>
<sequence length="255" mass="27907">MRRWALRLEYDGRGFVGWQRQENGLSVQEVLETAASRLCGGDVPDSVVAGRTDAGVHAAGQVAALELPDRLDARAVREALNFHMKPHAVAVIEAAPAPSAAWSPRFSAIGRAYRYLILNRSARPALRDGFVWHVKAPLDAPAMHEAAQSLLGRHDFTSFRASSCQANSPLRTLDRLDVRRDGETVVIEAEARSFLHHQVRNMVGTLKLVGEGRWRVGRVAEALAARDRSAAGPTAPPDGLVLVAVRYEVDPFPRN</sequence>
<evidence type="ECO:0000255" key="1">
    <source>
        <dbReference type="HAMAP-Rule" id="MF_00171"/>
    </source>
</evidence>
<feature type="chain" id="PRO_1000017032" description="tRNA pseudouridine synthase A">
    <location>
        <begin position="1"/>
        <end position="255"/>
    </location>
</feature>
<feature type="active site" description="Nucleophile" evidence="1">
    <location>
        <position position="53"/>
    </location>
</feature>
<feature type="binding site" evidence="1">
    <location>
        <position position="113"/>
    </location>
    <ligand>
        <name>substrate</name>
    </ligand>
</feature>
<name>TRUA_ACICJ</name>
<proteinExistence type="inferred from homology"/>
<keyword id="KW-0413">Isomerase</keyword>
<keyword id="KW-1185">Reference proteome</keyword>
<keyword id="KW-0819">tRNA processing</keyword>
<reference key="1">
    <citation type="submission" date="2007-05" db="EMBL/GenBank/DDBJ databases">
        <title>Complete sequence of chromosome of Acidiphilium cryptum JF-5.</title>
        <authorList>
            <consortium name="US DOE Joint Genome Institute"/>
            <person name="Copeland A."/>
            <person name="Lucas S."/>
            <person name="Lapidus A."/>
            <person name="Barry K."/>
            <person name="Detter J.C."/>
            <person name="Glavina del Rio T."/>
            <person name="Hammon N."/>
            <person name="Israni S."/>
            <person name="Dalin E."/>
            <person name="Tice H."/>
            <person name="Pitluck S."/>
            <person name="Sims D."/>
            <person name="Brettin T."/>
            <person name="Bruce D."/>
            <person name="Han C."/>
            <person name="Schmutz J."/>
            <person name="Larimer F."/>
            <person name="Land M."/>
            <person name="Hauser L."/>
            <person name="Kyrpides N."/>
            <person name="Kim E."/>
            <person name="Magnuson T."/>
            <person name="Richardson P."/>
        </authorList>
    </citation>
    <scope>NUCLEOTIDE SEQUENCE [LARGE SCALE GENOMIC DNA]</scope>
    <source>
        <strain>JF-5</strain>
    </source>
</reference>
<accession>A5FVK4</accession>
<dbReference type="EC" id="5.4.99.12" evidence="1"/>
<dbReference type="EMBL" id="CP000697">
    <property type="protein sequence ID" value="ABQ29636.1"/>
    <property type="molecule type" value="Genomic_DNA"/>
</dbReference>
<dbReference type="RefSeq" id="WP_007422317.1">
    <property type="nucleotide sequence ID" value="NC_009484.1"/>
</dbReference>
<dbReference type="SMR" id="A5FVK4"/>
<dbReference type="STRING" id="349163.Acry_0411"/>
<dbReference type="KEGG" id="acr:Acry_0411"/>
<dbReference type="eggNOG" id="COG0101">
    <property type="taxonomic scope" value="Bacteria"/>
</dbReference>
<dbReference type="HOGENOM" id="CLU_014673_0_2_5"/>
<dbReference type="Proteomes" id="UP000000245">
    <property type="component" value="Chromosome"/>
</dbReference>
<dbReference type="GO" id="GO:0003723">
    <property type="term" value="F:RNA binding"/>
    <property type="evidence" value="ECO:0007669"/>
    <property type="project" value="InterPro"/>
</dbReference>
<dbReference type="GO" id="GO:0160147">
    <property type="term" value="F:tRNA pseudouridine(38-40) synthase activity"/>
    <property type="evidence" value="ECO:0007669"/>
    <property type="project" value="UniProtKB-EC"/>
</dbReference>
<dbReference type="GO" id="GO:0031119">
    <property type="term" value="P:tRNA pseudouridine synthesis"/>
    <property type="evidence" value="ECO:0007669"/>
    <property type="project" value="UniProtKB-UniRule"/>
</dbReference>
<dbReference type="CDD" id="cd02570">
    <property type="entry name" value="PseudoU_synth_EcTruA"/>
    <property type="match status" value="1"/>
</dbReference>
<dbReference type="Gene3D" id="3.30.70.660">
    <property type="entry name" value="Pseudouridine synthase I, catalytic domain, C-terminal subdomain"/>
    <property type="match status" value="1"/>
</dbReference>
<dbReference type="Gene3D" id="3.30.70.580">
    <property type="entry name" value="Pseudouridine synthase I, catalytic domain, N-terminal subdomain"/>
    <property type="match status" value="1"/>
</dbReference>
<dbReference type="HAMAP" id="MF_00171">
    <property type="entry name" value="TruA"/>
    <property type="match status" value="1"/>
</dbReference>
<dbReference type="InterPro" id="IPR020103">
    <property type="entry name" value="PsdUridine_synth_cat_dom_sf"/>
</dbReference>
<dbReference type="InterPro" id="IPR001406">
    <property type="entry name" value="PsdUridine_synth_TruA"/>
</dbReference>
<dbReference type="InterPro" id="IPR020097">
    <property type="entry name" value="PsdUridine_synth_TruA_a/b_dom"/>
</dbReference>
<dbReference type="InterPro" id="IPR020095">
    <property type="entry name" value="PsdUridine_synth_TruA_C"/>
</dbReference>
<dbReference type="InterPro" id="IPR020094">
    <property type="entry name" value="TruA/RsuA/RluB/E/F_N"/>
</dbReference>
<dbReference type="NCBIfam" id="TIGR00071">
    <property type="entry name" value="hisT_truA"/>
    <property type="match status" value="1"/>
</dbReference>
<dbReference type="PANTHER" id="PTHR11142">
    <property type="entry name" value="PSEUDOURIDYLATE SYNTHASE"/>
    <property type="match status" value="1"/>
</dbReference>
<dbReference type="PANTHER" id="PTHR11142:SF0">
    <property type="entry name" value="TRNA PSEUDOURIDINE SYNTHASE-LIKE 1"/>
    <property type="match status" value="1"/>
</dbReference>
<dbReference type="Pfam" id="PF01416">
    <property type="entry name" value="PseudoU_synth_1"/>
    <property type="match status" value="2"/>
</dbReference>
<dbReference type="PIRSF" id="PIRSF001430">
    <property type="entry name" value="tRNA_psdUrid_synth"/>
    <property type="match status" value="1"/>
</dbReference>
<dbReference type="SUPFAM" id="SSF55120">
    <property type="entry name" value="Pseudouridine synthase"/>
    <property type="match status" value="1"/>
</dbReference>
<organism>
    <name type="scientific">Acidiphilium cryptum (strain JF-5)</name>
    <dbReference type="NCBI Taxonomy" id="349163"/>
    <lineage>
        <taxon>Bacteria</taxon>
        <taxon>Pseudomonadati</taxon>
        <taxon>Pseudomonadota</taxon>
        <taxon>Alphaproteobacteria</taxon>
        <taxon>Acetobacterales</taxon>
        <taxon>Acidocellaceae</taxon>
        <taxon>Acidiphilium</taxon>
    </lineage>
</organism>